<comment type="similarity">
    <text evidence="1">Belongs to the UPF0270 family.</text>
</comment>
<proteinExistence type="inferred from homology"/>
<name>Y1129_HAEI8</name>
<organism>
    <name type="scientific">Haemophilus influenzae (strain 86-028NP)</name>
    <dbReference type="NCBI Taxonomy" id="281310"/>
    <lineage>
        <taxon>Bacteria</taxon>
        <taxon>Pseudomonadati</taxon>
        <taxon>Pseudomonadota</taxon>
        <taxon>Gammaproteobacteria</taxon>
        <taxon>Pasteurellales</taxon>
        <taxon>Pasteurellaceae</taxon>
        <taxon>Haemophilus</taxon>
    </lineage>
</organism>
<gene>
    <name type="ordered locus">NTHI1129</name>
</gene>
<dbReference type="EMBL" id="CP000057">
    <property type="protein sequence ID" value="AAX87996.1"/>
    <property type="molecule type" value="Genomic_DNA"/>
</dbReference>
<dbReference type="RefSeq" id="WP_005647999.1">
    <property type="nucleotide sequence ID" value="NC_007146.2"/>
</dbReference>
<dbReference type="SMR" id="Q4QLV1"/>
<dbReference type="KEGG" id="hit:NTHI1129"/>
<dbReference type="HOGENOM" id="CLU_186759_1_0_6"/>
<dbReference type="Proteomes" id="UP000002525">
    <property type="component" value="Chromosome"/>
</dbReference>
<dbReference type="Gene3D" id="1.10.10.610">
    <property type="entry name" value="YehU-like"/>
    <property type="match status" value="1"/>
</dbReference>
<dbReference type="HAMAP" id="MF_00690">
    <property type="entry name" value="UPF0270"/>
    <property type="match status" value="1"/>
</dbReference>
<dbReference type="InterPro" id="IPR010648">
    <property type="entry name" value="UPF0270"/>
</dbReference>
<dbReference type="InterPro" id="IPR036685">
    <property type="entry name" value="YehU-like_sf"/>
</dbReference>
<dbReference type="NCBIfam" id="NF003438">
    <property type="entry name" value="PRK04966.1"/>
    <property type="match status" value="1"/>
</dbReference>
<dbReference type="Pfam" id="PF06794">
    <property type="entry name" value="UPF0270"/>
    <property type="match status" value="1"/>
</dbReference>
<dbReference type="PIRSF" id="PIRSF006169">
    <property type="entry name" value="UCP006169"/>
    <property type="match status" value="1"/>
</dbReference>
<dbReference type="SUPFAM" id="SSF118001">
    <property type="entry name" value="YehU-like"/>
    <property type="match status" value="1"/>
</dbReference>
<evidence type="ECO:0000255" key="1">
    <source>
        <dbReference type="HAMAP-Rule" id="MF_00690"/>
    </source>
</evidence>
<sequence length="83" mass="9716">MIIPWQELEAETLDNIVESVILREGTDYGIEELSLNQKKQLLLTQIRNGIALIVWSELHESIDIKNKTEFLKQECKEQECQMN</sequence>
<feature type="chain" id="PRO_1000045163" description="UPF0270 protein NTHI1129">
    <location>
        <begin position="1"/>
        <end position="83"/>
    </location>
</feature>
<reference key="1">
    <citation type="journal article" date="2005" name="J. Bacteriol.">
        <title>Genomic sequence of an otitis media isolate of nontypeable Haemophilus influenzae: comparative study with H. influenzae serotype d, strain KW20.</title>
        <authorList>
            <person name="Harrison A."/>
            <person name="Dyer D.W."/>
            <person name="Gillaspy A."/>
            <person name="Ray W.C."/>
            <person name="Mungur R."/>
            <person name="Carson M.B."/>
            <person name="Zhong H."/>
            <person name="Gipson J."/>
            <person name="Gipson M."/>
            <person name="Johnson L.S."/>
            <person name="Lewis L."/>
            <person name="Bakaletz L.O."/>
            <person name="Munson R.S. Jr."/>
        </authorList>
    </citation>
    <scope>NUCLEOTIDE SEQUENCE [LARGE SCALE GENOMIC DNA]</scope>
    <source>
        <strain>86-028NP</strain>
    </source>
</reference>
<protein>
    <recommendedName>
        <fullName evidence="1">UPF0270 protein NTHI1129</fullName>
    </recommendedName>
</protein>
<accession>Q4QLV1</accession>